<reference key="1">
    <citation type="submission" date="2009-06" db="EMBL/GenBank/DDBJ databases">
        <title>Complete sequence of Desulfovibrio salexigens DSM 2638.</title>
        <authorList>
            <consortium name="US DOE Joint Genome Institute"/>
            <person name="Lucas S."/>
            <person name="Copeland A."/>
            <person name="Lapidus A."/>
            <person name="Glavina del Rio T."/>
            <person name="Tice H."/>
            <person name="Bruce D."/>
            <person name="Goodwin L."/>
            <person name="Pitluck S."/>
            <person name="Munk A.C."/>
            <person name="Brettin T."/>
            <person name="Detter J.C."/>
            <person name="Han C."/>
            <person name="Tapia R."/>
            <person name="Larimer F."/>
            <person name="Land M."/>
            <person name="Hauser L."/>
            <person name="Kyrpides N."/>
            <person name="Anderson I."/>
            <person name="Wall J.D."/>
            <person name="Arkin A.P."/>
            <person name="Dehal P."/>
            <person name="Chivian D."/>
            <person name="Giles B."/>
            <person name="Hazen T.C."/>
        </authorList>
    </citation>
    <scope>NUCLEOTIDE SEQUENCE [LARGE SCALE GENOMIC DNA]</scope>
    <source>
        <strain>ATCC 14822 / DSM 2638 / NCIMB 8403 / VKM B-1763</strain>
    </source>
</reference>
<organism>
    <name type="scientific">Maridesulfovibrio salexigens (strain ATCC 14822 / DSM 2638 / NCIMB 8403 / VKM B-1763)</name>
    <name type="common">Desulfovibrio salexigens</name>
    <dbReference type="NCBI Taxonomy" id="526222"/>
    <lineage>
        <taxon>Bacteria</taxon>
        <taxon>Pseudomonadati</taxon>
        <taxon>Thermodesulfobacteriota</taxon>
        <taxon>Desulfovibrionia</taxon>
        <taxon>Desulfovibrionales</taxon>
        <taxon>Desulfovibrionaceae</taxon>
        <taxon>Maridesulfovibrio</taxon>
    </lineage>
</organism>
<accession>C6C1A9</accession>
<feature type="chain" id="PRO_1000214359" description="Small ribosomal subunit protein uS11">
    <location>
        <begin position="1"/>
        <end position="129"/>
    </location>
</feature>
<name>RS11_MARSD</name>
<comment type="function">
    <text evidence="1">Located on the platform of the 30S subunit, it bridges several disparate RNA helices of the 16S rRNA. Forms part of the Shine-Dalgarno cleft in the 70S ribosome.</text>
</comment>
<comment type="subunit">
    <text evidence="1">Part of the 30S ribosomal subunit. Interacts with proteins S7 and S18. Binds to IF-3.</text>
</comment>
<comment type="similarity">
    <text evidence="1">Belongs to the universal ribosomal protein uS11 family.</text>
</comment>
<dbReference type="EMBL" id="CP001649">
    <property type="protein sequence ID" value="ACS79272.1"/>
    <property type="molecule type" value="Genomic_DNA"/>
</dbReference>
<dbReference type="RefSeq" id="WP_015851090.1">
    <property type="nucleotide sequence ID" value="NC_012881.1"/>
</dbReference>
<dbReference type="SMR" id="C6C1A9"/>
<dbReference type="STRING" id="526222.Desal_1209"/>
<dbReference type="KEGG" id="dsa:Desal_1209"/>
<dbReference type="eggNOG" id="COG0100">
    <property type="taxonomic scope" value="Bacteria"/>
</dbReference>
<dbReference type="HOGENOM" id="CLU_072439_5_0_7"/>
<dbReference type="OrthoDB" id="9806415at2"/>
<dbReference type="Proteomes" id="UP000002601">
    <property type="component" value="Chromosome"/>
</dbReference>
<dbReference type="GO" id="GO:1990904">
    <property type="term" value="C:ribonucleoprotein complex"/>
    <property type="evidence" value="ECO:0007669"/>
    <property type="project" value="UniProtKB-KW"/>
</dbReference>
<dbReference type="GO" id="GO:0005840">
    <property type="term" value="C:ribosome"/>
    <property type="evidence" value="ECO:0007669"/>
    <property type="project" value="UniProtKB-KW"/>
</dbReference>
<dbReference type="GO" id="GO:0019843">
    <property type="term" value="F:rRNA binding"/>
    <property type="evidence" value="ECO:0007669"/>
    <property type="project" value="UniProtKB-UniRule"/>
</dbReference>
<dbReference type="GO" id="GO:0003735">
    <property type="term" value="F:structural constituent of ribosome"/>
    <property type="evidence" value="ECO:0007669"/>
    <property type="project" value="InterPro"/>
</dbReference>
<dbReference type="GO" id="GO:0006412">
    <property type="term" value="P:translation"/>
    <property type="evidence" value="ECO:0007669"/>
    <property type="project" value="UniProtKB-UniRule"/>
</dbReference>
<dbReference type="FunFam" id="3.30.420.80:FF:000001">
    <property type="entry name" value="30S ribosomal protein S11"/>
    <property type="match status" value="1"/>
</dbReference>
<dbReference type="Gene3D" id="3.30.420.80">
    <property type="entry name" value="Ribosomal protein S11"/>
    <property type="match status" value="1"/>
</dbReference>
<dbReference type="HAMAP" id="MF_01310">
    <property type="entry name" value="Ribosomal_uS11"/>
    <property type="match status" value="1"/>
</dbReference>
<dbReference type="InterPro" id="IPR001971">
    <property type="entry name" value="Ribosomal_uS11"/>
</dbReference>
<dbReference type="InterPro" id="IPR019981">
    <property type="entry name" value="Ribosomal_uS11_bac-type"/>
</dbReference>
<dbReference type="InterPro" id="IPR018102">
    <property type="entry name" value="Ribosomal_uS11_CS"/>
</dbReference>
<dbReference type="InterPro" id="IPR036967">
    <property type="entry name" value="Ribosomal_uS11_sf"/>
</dbReference>
<dbReference type="NCBIfam" id="NF003698">
    <property type="entry name" value="PRK05309.1"/>
    <property type="match status" value="1"/>
</dbReference>
<dbReference type="NCBIfam" id="TIGR03632">
    <property type="entry name" value="uS11_bact"/>
    <property type="match status" value="1"/>
</dbReference>
<dbReference type="PANTHER" id="PTHR11759">
    <property type="entry name" value="40S RIBOSOMAL PROTEIN S14/30S RIBOSOMAL PROTEIN S11"/>
    <property type="match status" value="1"/>
</dbReference>
<dbReference type="Pfam" id="PF00411">
    <property type="entry name" value="Ribosomal_S11"/>
    <property type="match status" value="1"/>
</dbReference>
<dbReference type="PIRSF" id="PIRSF002131">
    <property type="entry name" value="Ribosomal_S11"/>
    <property type="match status" value="1"/>
</dbReference>
<dbReference type="SUPFAM" id="SSF53137">
    <property type="entry name" value="Translational machinery components"/>
    <property type="match status" value="1"/>
</dbReference>
<dbReference type="PROSITE" id="PS00054">
    <property type="entry name" value="RIBOSOMAL_S11"/>
    <property type="match status" value="1"/>
</dbReference>
<evidence type="ECO:0000255" key="1">
    <source>
        <dbReference type="HAMAP-Rule" id="MF_01310"/>
    </source>
</evidence>
<evidence type="ECO:0000305" key="2"/>
<gene>
    <name evidence="1" type="primary">rpsK</name>
    <name type="ordered locus">Desal_1209</name>
</gene>
<protein>
    <recommendedName>
        <fullName evidence="1">Small ribosomal subunit protein uS11</fullName>
    </recommendedName>
    <alternativeName>
        <fullName evidence="2">30S ribosomal protein S11</fullName>
    </alternativeName>
</protein>
<sequence length="129" mass="13886">MARPRRSGKKKEKKNVPVGIAHVKATFNNTIITFTDLKGNVISWATSGASGFKGSRKSTPFAAQVAAETAARKAQDQGMRTVGIFVKGPGSGREAAMRAIGNVGMKVNFIRDITPIPHNGCRPPKRRRV</sequence>
<proteinExistence type="inferred from homology"/>
<keyword id="KW-1185">Reference proteome</keyword>
<keyword id="KW-0687">Ribonucleoprotein</keyword>
<keyword id="KW-0689">Ribosomal protein</keyword>
<keyword id="KW-0694">RNA-binding</keyword>
<keyword id="KW-0699">rRNA-binding</keyword>